<dbReference type="EC" id="6.3.2.2" evidence="1"/>
<dbReference type="EMBL" id="AM406670">
    <property type="protein sequence ID" value="CAL94893.1"/>
    <property type="molecule type" value="Genomic_DNA"/>
</dbReference>
<dbReference type="RefSeq" id="WP_011766007.1">
    <property type="nucleotide sequence ID" value="NC_008702.1"/>
</dbReference>
<dbReference type="SMR" id="A1K7T8"/>
<dbReference type="STRING" id="62928.azo2276"/>
<dbReference type="KEGG" id="azo:azo2276"/>
<dbReference type="eggNOG" id="COG2170">
    <property type="taxonomic scope" value="Bacteria"/>
</dbReference>
<dbReference type="HOGENOM" id="CLU_044848_1_1_4"/>
<dbReference type="Proteomes" id="UP000002588">
    <property type="component" value="Chromosome"/>
</dbReference>
<dbReference type="GO" id="GO:0005524">
    <property type="term" value="F:ATP binding"/>
    <property type="evidence" value="ECO:0007669"/>
    <property type="project" value="UniProtKB-KW"/>
</dbReference>
<dbReference type="GO" id="GO:0004357">
    <property type="term" value="F:glutamate-cysteine ligase activity"/>
    <property type="evidence" value="ECO:0007669"/>
    <property type="project" value="UniProtKB-EC"/>
</dbReference>
<dbReference type="GO" id="GO:0042398">
    <property type="term" value="P:modified amino acid biosynthetic process"/>
    <property type="evidence" value="ECO:0007669"/>
    <property type="project" value="InterPro"/>
</dbReference>
<dbReference type="Gene3D" id="3.30.590.20">
    <property type="match status" value="1"/>
</dbReference>
<dbReference type="HAMAP" id="MF_01609">
    <property type="entry name" value="Glu_cys_ligase_2"/>
    <property type="match status" value="1"/>
</dbReference>
<dbReference type="InterPro" id="IPR050141">
    <property type="entry name" value="GCL_type2/YbdK_subfam"/>
</dbReference>
<dbReference type="InterPro" id="IPR006336">
    <property type="entry name" value="GCS2"/>
</dbReference>
<dbReference type="InterPro" id="IPR014746">
    <property type="entry name" value="Gln_synth/guanido_kin_cat_dom"/>
</dbReference>
<dbReference type="InterPro" id="IPR011793">
    <property type="entry name" value="YbdK"/>
</dbReference>
<dbReference type="NCBIfam" id="TIGR02050">
    <property type="entry name" value="gshA_cyan_rel"/>
    <property type="match status" value="1"/>
</dbReference>
<dbReference type="NCBIfam" id="NF010040">
    <property type="entry name" value="PRK13516.1"/>
    <property type="match status" value="1"/>
</dbReference>
<dbReference type="PANTHER" id="PTHR36510">
    <property type="entry name" value="GLUTAMATE--CYSTEINE LIGASE 2-RELATED"/>
    <property type="match status" value="1"/>
</dbReference>
<dbReference type="PANTHER" id="PTHR36510:SF1">
    <property type="entry name" value="GLUTAMATE--CYSTEINE LIGASE 2-RELATED"/>
    <property type="match status" value="1"/>
</dbReference>
<dbReference type="Pfam" id="PF04107">
    <property type="entry name" value="GCS2"/>
    <property type="match status" value="1"/>
</dbReference>
<dbReference type="SUPFAM" id="SSF55931">
    <property type="entry name" value="Glutamine synthetase/guanido kinase"/>
    <property type="match status" value="1"/>
</dbReference>
<proteinExistence type="inferred from homology"/>
<name>GCS2_AZOSB</name>
<comment type="function">
    <text evidence="1">ATP-dependent carboxylate-amine ligase which exhibits weak glutamate--cysteine ligase activity.</text>
</comment>
<comment type="catalytic activity">
    <reaction evidence="1">
        <text>L-cysteine + L-glutamate + ATP = gamma-L-glutamyl-L-cysteine + ADP + phosphate + H(+)</text>
        <dbReference type="Rhea" id="RHEA:13285"/>
        <dbReference type="ChEBI" id="CHEBI:15378"/>
        <dbReference type="ChEBI" id="CHEBI:29985"/>
        <dbReference type="ChEBI" id="CHEBI:30616"/>
        <dbReference type="ChEBI" id="CHEBI:35235"/>
        <dbReference type="ChEBI" id="CHEBI:43474"/>
        <dbReference type="ChEBI" id="CHEBI:58173"/>
        <dbReference type="ChEBI" id="CHEBI:456216"/>
        <dbReference type="EC" id="6.3.2.2"/>
    </reaction>
</comment>
<comment type="similarity">
    <text evidence="1">Belongs to the glutamate--cysteine ligase type 2 family. YbdK subfamily.</text>
</comment>
<evidence type="ECO:0000255" key="1">
    <source>
        <dbReference type="HAMAP-Rule" id="MF_01609"/>
    </source>
</evidence>
<gene>
    <name type="ordered locus">azo2276</name>
</gene>
<protein>
    <recommendedName>
        <fullName evidence="1">Putative glutamate--cysteine ligase 2</fullName>
        <ecNumber evidence="1">6.3.2.2</ecNumber>
    </recommendedName>
    <alternativeName>
        <fullName evidence="1">Gamma-glutamylcysteine synthetase 2</fullName>
        <shortName evidence="1">GCS 2</shortName>
        <shortName evidence="1">Gamma-GCS 2</shortName>
    </alternativeName>
</protein>
<accession>A1K7T8</accession>
<sequence>MSLEAFSPSRALSIGVELELQLVGTHDYDLVGAADDMLRLTAGLDLPGDIKPEMTDSMIEISTGVCDNHAMVLTQLDGLRAALVDIARRLNVGICGGGTHGFQDWGERRIFDNPRFHYLHELYGYLAKQFTVFGQHVHIGCPGPDAALYLVHGLSRYIPHLIALSASSPFLQGQDTGFQSSRLNAVFAFPLSGRAPFALSWSDFGAYFDKMSATGVVSSMKDFYWDIRPKPEYGTVEVRVMDTPLTVERAAALAAYIQALARYLMVERPIQPREDDYLVYTFNRFQACRFGYAGTYVDPENHTHCSIAEALEASFTRIEQHAIELGAEAAIGRLRADVASGRNDAWWLRGQLGPQVTLPEVVMAQCRRWMNGEGM</sequence>
<feature type="chain" id="PRO_0000291486" description="Putative glutamate--cysteine ligase 2">
    <location>
        <begin position="1"/>
        <end position="375"/>
    </location>
</feature>
<reference key="1">
    <citation type="journal article" date="2006" name="Nat. Biotechnol.">
        <title>Complete genome of the mutualistic, N2-fixing grass endophyte Azoarcus sp. strain BH72.</title>
        <authorList>
            <person name="Krause A."/>
            <person name="Ramakumar A."/>
            <person name="Bartels D."/>
            <person name="Battistoni F."/>
            <person name="Bekel T."/>
            <person name="Boch J."/>
            <person name="Boehm M."/>
            <person name="Friedrich F."/>
            <person name="Hurek T."/>
            <person name="Krause L."/>
            <person name="Linke B."/>
            <person name="McHardy A.C."/>
            <person name="Sarkar A."/>
            <person name="Schneiker S."/>
            <person name="Syed A.A."/>
            <person name="Thauer R."/>
            <person name="Vorhoelter F.-J."/>
            <person name="Weidner S."/>
            <person name="Puehler A."/>
            <person name="Reinhold-Hurek B."/>
            <person name="Kaiser O."/>
            <person name="Goesmann A."/>
        </authorList>
    </citation>
    <scope>NUCLEOTIDE SEQUENCE [LARGE SCALE GENOMIC DNA]</scope>
    <source>
        <strain>BH72</strain>
    </source>
</reference>
<organism>
    <name type="scientific">Azoarcus sp. (strain BH72)</name>
    <dbReference type="NCBI Taxonomy" id="418699"/>
    <lineage>
        <taxon>Bacteria</taxon>
        <taxon>Pseudomonadati</taxon>
        <taxon>Pseudomonadota</taxon>
        <taxon>Betaproteobacteria</taxon>
        <taxon>Rhodocyclales</taxon>
        <taxon>Zoogloeaceae</taxon>
        <taxon>Azoarcus</taxon>
    </lineage>
</organism>
<keyword id="KW-0067">ATP-binding</keyword>
<keyword id="KW-0436">Ligase</keyword>
<keyword id="KW-0547">Nucleotide-binding</keyword>
<keyword id="KW-1185">Reference proteome</keyword>